<gene>
    <name evidence="1" type="primary">hemE</name>
    <name type="ordered locus">OTT_0515</name>
</gene>
<keyword id="KW-0963">Cytoplasm</keyword>
<keyword id="KW-0210">Decarboxylase</keyword>
<keyword id="KW-0456">Lyase</keyword>
<keyword id="KW-0627">Porphyrin biosynthesis</keyword>
<evidence type="ECO:0000255" key="1">
    <source>
        <dbReference type="HAMAP-Rule" id="MF_00218"/>
    </source>
</evidence>
<dbReference type="EC" id="4.1.1.37" evidence="1"/>
<dbReference type="EMBL" id="AP008981">
    <property type="protein sequence ID" value="BAG39973.1"/>
    <property type="molecule type" value="Genomic_DNA"/>
</dbReference>
<dbReference type="RefSeq" id="WP_012461169.1">
    <property type="nucleotide sequence ID" value="NC_010793.1"/>
</dbReference>
<dbReference type="SMR" id="B3CR66"/>
<dbReference type="KEGG" id="ott:OTT_0515"/>
<dbReference type="HOGENOM" id="CLU_040933_0_0_5"/>
<dbReference type="OrthoDB" id="9806656at2"/>
<dbReference type="UniPathway" id="UPA00251">
    <property type="reaction ID" value="UER00321"/>
</dbReference>
<dbReference type="Proteomes" id="UP000001033">
    <property type="component" value="Chromosome"/>
</dbReference>
<dbReference type="GO" id="GO:0005829">
    <property type="term" value="C:cytosol"/>
    <property type="evidence" value="ECO:0007669"/>
    <property type="project" value="TreeGrafter"/>
</dbReference>
<dbReference type="GO" id="GO:0004853">
    <property type="term" value="F:uroporphyrinogen decarboxylase activity"/>
    <property type="evidence" value="ECO:0007669"/>
    <property type="project" value="UniProtKB-UniRule"/>
</dbReference>
<dbReference type="GO" id="GO:0006782">
    <property type="term" value="P:protoporphyrinogen IX biosynthetic process"/>
    <property type="evidence" value="ECO:0007669"/>
    <property type="project" value="UniProtKB-UniRule"/>
</dbReference>
<dbReference type="CDD" id="cd00717">
    <property type="entry name" value="URO-D"/>
    <property type="match status" value="1"/>
</dbReference>
<dbReference type="Gene3D" id="3.20.20.210">
    <property type="match status" value="1"/>
</dbReference>
<dbReference type="HAMAP" id="MF_00218">
    <property type="entry name" value="URO_D"/>
    <property type="match status" value="1"/>
</dbReference>
<dbReference type="InterPro" id="IPR038071">
    <property type="entry name" value="UROD/MetE-like_sf"/>
</dbReference>
<dbReference type="InterPro" id="IPR006361">
    <property type="entry name" value="Uroporphyrinogen_deCO2ase_HemE"/>
</dbReference>
<dbReference type="InterPro" id="IPR000257">
    <property type="entry name" value="Uroporphyrinogen_deCOase"/>
</dbReference>
<dbReference type="NCBIfam" id="TIGR01464">
    <property type="entry name" value="hemE"/>
    <property type="match status" value="1"/>
</dbReference>
<dbReference type="PANTHER" id="PTHR21091">
    <property type="entry name" value="METHYLTETRAHYDROFOLATE:HOMOCYSTEINE METHYLTRANSFERASE RELATED"/>
    <property type="match status" value="1"/>
</dbReference>
<dbReference type="PANTHER" id="PTHR21091:SF169">
    <property type="entry name" value="UROPORPHYRINOGEN DECARBOXYLASE"/>
    <property type="match status" value="1"/>
</dbReference>
<dbReference type="Pfam" id="PF01208">
    <property type="entry name" value="URO-D"/>
    <property type="match status" value="1"/>
</dbReference>
<dbReference type="SUPFAM" id="SSF51726">
    <property type="entry name" value="UROD/MetE-like"/>
    <property type="match status" value="1"/>
</dbReference>
<dbReference type="PROSITE" id="PS00906">
    <property type="entry name" value="UROD_1"/>
    <property type="match status" value="1"/>
</dbReference>
<organism>
    <name type="scientific">Orientia tsutsugamushi (strain Ikeda)</name>
    <name type="common">Rickettsia tsutsugamushi</name>
    <dbReference type="NCBI Taxonomy" id="334380"/>
    <lineage>
        <taxon>Bacteria</taxon>
        <taxon>Pseudomonadati</taxon>
        <taxon>Pseudomonadota</taxon>
        <taxon>Alphaproteobacteria</taxon>
        <taxon>Rickettsiales</taxon>
        <taxon>Rickettsiaceae</taxon>
        <taxon>Rickettsieae</taxon>
        <taxon>Orientia</taxon>
    </lineage>
</organism>
<sequence length="342" mass="39061">MSKIIQAFNSSNRNYTPIWFMRQAGRYLPEYQMLRKTTNSFFELCYDPIKAAEVTLQPIARFDFDAAIIFSDILVLPDSLGINIRFINNLGPTAEKIPNLLDLQKLKIQNTKISKVYEAIDIVRKKLNKQKSLIGFCGGPWTVLTYILGYNSRNTPKFQEIKSNNKHELILDSINILTKHTIDHLENQILAGADIVQIFDSWAGILPYQEFSEYVIKPTSNIVKTLKEKFPHIKIIGFPKGAGKLYHKYTKETNVDGISCDYNLPLNEMLKLQKNALVQGNLNPNTILSEDSKIIEESVIKIMDTLSNNRFIFNLGHGILPETPIKNVELIVKLVKNYHSSE</sequence>
<comment type="function">
    <text evidence="1">Catalyzes the decarboxylation of four acetate groups of uroporphyrinogen-III to yield coproporphyrinogen-III.</text>
</comment>
<comment type="catalytic activity">
    <reaction evidence="1">
        <text>uroporphyrinogen III + 4 H(+) = coproporphyrinogen III + 4 CO2</text>
        <dbReference type="Rhea" id="RHEA:19865"/>
        <dbReference type="ChEBI" id="CHEBI:15378"/>
        <dbReference type="ChEBI" id="CHEBI:16526"/>
        <dbReference type="ChEBI" id="CHEBI:57308"/>
        <dbReference type="ChEBI" id="CHEBI:57309"/>
        <dbReference type="EC" id="4.1.1.37"/>
    </reaction>
</comment>
<comment type="pathway">
    <text evidence="1">Porphyrin-containing compound metabolism; protoporphyrin-IX biosynthesis; coproporphyrinogen-III from 5-aminolevulinate: step 4/4.</text>
</comment>
<comment type="subunit">
    <text evidence="1">Homodimer.</text>
</comment>
<comment type="subcellular location">
    <subcellularLocation>
        <location evidence="1">Cytoplasm</location>
    </subcellularLocation>
</comment>
<comment type="similarity">
    <text evidence="1">Belongs to the uroporphyrinogen decarboxylase family.</text>
</comment>
<accession>B3CR66</accession>
<protein>
    <recommendedName>
        <fullName evidence="1">Uroporphyrinogen decarboxylase</fullName>
        <shortName evidence="1">UPD</shortName>
        <shortName evidence="1">URO-D</shortName>
        <ecNumber evidence="1">4.1.1.37</ecNumber>
    </recommendedName>
</protein>
<reference key="1">
    <citation type="journal article" date="2008" name="DNA Res.">
        <title>The whole-genome sequencing of the obligate intracellular bacterium Orientia tsutsugamushi revealed massive gene amplification during reductive genome evolution.</title>
        <authorList>
            <person name="Nakayama K."/>
            <person name="Yamashita A."/>
            <person name="Kurokawa K."/>
            <person name="Morimoto T."/>
            <person name="Ogawa M."/>
            <person name="Fukuhara M."/>
            <person name="Urakami H."/>
            <person name="Ohnishi M."/>
            <person name="Uchiyama I."/>
            <person name="Ogura Y."/>
            <person name="Ooka T."/>
            <person name="Oshima K."/>
            <person name="Tamura A."/>
            <person name="Hattori M."/>
            <person name="Hayashi T."/>
        </authorList>
    </citation>
    <scope>NUCLEOTIDE SEQUENCE [LARGE SCALE GENOMIC DNA]</scope>
    <source>
        <strain>Ikeda</strain>
    </source>
</reference>
<proteinExistence type="inferred from homology"/>
<feature type="chain" id="PRO_1000100004" description="Uroporphyrinogen decarboxylase">
    <location>
        <begin position="1"/>
        <end position="342"/>
    </location>
</feature>
<feature type="binding site" evidence="1">
    <location>
        <begin position="22"/>
        <end position="26"/>
    </location>
    <ligand>
        <name>substrate</name>
    </ligand>
</feature>
<feature type="binding site" evidence="1">
    <location>
        <position position="42"/>
    </location>
    <ligand>
        <name>substrate</name>
    </ligand>
</feature>
<feature type="binding site" evidence="1">
    <location>
        <position position="72"/>
    </location>
    <ligand>
        <name>substrate</name>
    </ligand>
</feature>
<feature type="binding site" evidence="1">
    <location>
        <position position="146"/>
    </location>
    <ligand>
        <name>substrate</name>
    </ligand>
</feature>
<feature type="binding site" evidence="1">
    <location>
        <position position="201"/>
    </location>
    <ligand>
        <name>substrate</name>
    </ligand>
</feature>
<feature type="binding site" evidence="1">
    <location>
        <position position="317"/>
    </location>
    <ligand>
        <name>substrate</name>
    </ligand>
</feature>
<feature type="site" description="Transition state stabilizer" evidence="1">
    <location>
        <position position="72"/>
    </location>
</feature>
<name>DCUP_ORITI</name>